<organism>
    <name type="scientific">Latilactobacillus sakei subsp. sakei (strain 23K)</name>
    <name type="common">Lactobacillus sakei subsp. sakei</name>
    <dbReference type="NCBI Taxonomy" id="314315"/>
    <lineage>
        <taxon>Bacteria</taxon>
        <taxon>Bacillati</taxon>
        <taxon>Bacillota</taxon>
        <taxon>Bacilli</taxon>
        <taxon>Lactobacillales</taxon>
        <taxon>Lactobacillaceae</taxon>
        <taxon>Latilactobacillus</taxon>
    </lineage>
</organism>
<evidence type="ECO:0000255" key="1">
    <source>
        <dbReference type="HAMAP-Rule" id="MF_00092"/>
    </source>
</evidence>
<feature type="chain" id="PRO_1000093372" description="Endonuclease MutS2">
    <location>
        <begin position="1"/>
        <end position="787"/>
    </location>
</feature>
<feature type="domain" description="Smr" evidence="1">
    <location>
        <begin position="712"/>
        <end position="787"/>
    </location>
</feature>
<feature type="binding site" evidence="1">
    <location>
        <begin position="334"/>
        <end position="341"/>
    </location>
    <ligand>
        <name>ATP</name>
        <dbReference type="ChEBI" id="CHEBI:30616"/>
    </ligand>
</feature>
<gene>
    <name evidence="1" type="primary">mutS2</name>
    <name evidence="1" type="synonym">rqcU</name>
    <name type="ordered locus">LCA_0393</name>
</gene>
<keyword id="KW-0067">ATP-binding</keyword>
<keyword id="KW-0238">DNA-binding</keyword>
<keyword id="KW-0255">Endonuclease</keyword>
<keyword id="KW-0378">Hydrolase</keyword>
<keyword id="KW-0540">Nuclease</keyword>
<keyword id="KW-0547">Nucleotide-binding</keyword>
<keyword id="KW-1185">Reference proteome</keyword>
<keyword id="KW-0694">RNA-binding</keyword>
<keyword id="KW-0699">rRNA-binding</keyword>
<comment type="function">
    <text evidence="1">Endonuclease that is involved in the suppression of homologous recombination and thus may have a key role in the control of bacterial genetic diversity.</text>
</comment>
<comment type="function">
    <text evidence="1">Acts as a ribosome collision sensor, splitting the ribosome into its 2 subunits. Detects stalled/collided 70S ribosomes which it binds and splits by an ATP-hydrolysis driven conformational change. Acts upstream of the ribosome quality control system (RQC), a ribosome-associated complex that mediates the extraction of incompletely synthesized nascent chains from stalled ribosomes and their subsequent degradation. Probably generates substrates for RQC.</text>
</comment>
<comment type="subunit">
    <text evidence="1">Homodimer. Binds to stalled ribosomes, contacting rRNA.</text>
</comment>
<comment type="similarity">
    <text evidence="1">Belongs to the DNA mismatch repair MutS family. MutS2 subfamily.</text>
</comment>
<sequence>MNHKILKTLEYDKIKQMLQGYAITAFGQEQIATLEPINEADLIQIRLNQTKDGVDIERLKGGIPLPQLENIRPHLKRIEIGAMLNGSELAQIGRVLRATSAVVRFFDDLEKDELELKALPELVAQFVTLPQLTERIRSSVADDGAILDTASTKLRGLRTGLKQLEGQIRSRMASYTHGAKAKYLSDPIVTIRNDRYVIPVKQEYRGQFGGVVHDQSASGQTLFMEPQAIMELNNRLRQLQIEEQQEIERILAELSEAIMPERHNILANAELLGQLDFVNAKAQLAKALKATEPLINAENHVDLKQARHPLIDATKVVANDIAIGADYQAIVVTGPNTGGKTITLKTLGLVQVMAQSGLFITAREESQVGVFSDIFADIGDEQSIEQNLSTFSAHMENIIQILKQIDDRSLVLLDELGAGTDPQEGAALAIAILDQIGIVGANVVASTHYPELKIYGYNRPQTINASMEFDVATLQPTYRLLIGVPGRSNAFDISTRLGLPNSIVDQAKQLMNDESQDLNNMITDLENQRKAAETEYQALRHELTEATDLHQQLSTAYQQFFEDRETEMTKAKEKANAIVEKAEVKADKVITKLRDMQMNQGAQIKENQLIDAKAELGQLHQETTLKKNKVLQRAKRRQTLKVGDDVLVTSYGQRGTLIRQVDSKNWEVQMGIIKMKIANDDLEKQKVVEDNRPQRHVTTVNSGGARHVKAQLDLRGKRYEEAMAEVDQYIDAALLANYQQVTIVHGKGTGAIRQGVQEYLQANRQVKKYEYAPANAGGNGATIVTFK</sequence>
<accession>Q38YN3</accession>
<reference key="1">
    <citation type="journal article" date="2005" name="Nat. Biotechnol.">
        <title>The complete genome sequence of the meat-borne lactic acid bacterium Lactobacillus sakei 23K.</title>
        <authorList>
            <person name="Chaillou S."/>
            <person name="Champomier-Verges M.-C."/>
            <person name="Cornet M."/>
            <person name="Crutz-Le Coq A.-M."/>
            <person name="Dudez A.-M."/>
            <person name="Martin V."/>
            <person name="Beaufils S."/>
            <person name="Darbon-Rongere E."/>
            <person name="Bossy R."/>
            <person name="Loux V."/>
            <person name="Zagorec M."/>
        </authorList>
    </citation>
    <scope>NUCLEOTIDE SEQUENCE [LARGE SCALE GENOMIC DNA]</scope>
    <source>
        <strain>23K</strain>
    </source>
</reference>
<proteinExistence type="inferred from homology"/>
<name>MUTS2_LATSS</name>
<dbReference type="EC" id="3.1.-.-" evidence="1"/>
<dbReference type="EC" id="3.6.4.-" evidence="1"/>
<dbReference type="EMBL" id="CR936503">
    <property type="protein sequence ID" value="CAI54694.1"/>
    <property type="molecule type" value="Genomic_DNA"/>
</dbReference>
<dbReference type="RefSeq" id="WP_011374102.1">
    <property type="nucleotide sequence ID" value="NC_007576.1"/>
</dbReference>
<dbReference type="SMR" id="Q38YN3"/>
<dbReference type="STRING" id="314315.LCA_0393"/>
<dbReference type="KEGG" id="lsa:LCA_0393"/>
<dbReference type="eggNOG" id="COG1193">
    <property type="taxonomic scope" value="Bacteria"/>
</dbReference>
<dbReference type="HOGENOM" id="CLU_011252_2_1_9"/>
<dbReference type="OrthoDB" id="9808166at2"/>
<dbReference type="Proteomes" id="UP000002707">
    <property type="component" value="Chromosome"/>
</dbReference>
<dbReference type="GO" id="GO:0005524">
    <property type="term" value="F:ATP binding"/>
    <property type="evidence" value="ECO:0007669"/>
    <property type="project" value="UniProtKB-UniRule"/>
</dbReference>
<dbReference type="GO" id="GO:0016887">
    <property type="term" value="F:ATP hydrolysis activity"/>
    <property type="evidence" value="ECO:0007669"/>
    <property type="project" value="InterPro"/>
</dbReference>
<dbReference type="GO" id="GO:0140664">
    <property type="term" value="F:ATP-dependent DNA damage sensor activity"/>
    <property type="evidence" value="ECO:0007669"/>
    <property type="project" value="InterPro"/>
</dbReference>
<dbReference type="GO" id="GO:0004519">
    <property type="term" value="F:endonuclease activity"/>
    <property type="evidence" value="ECO:0007669"/>
    <property type="project" value="UniProtKB-UniRule"/>
</dbReference>
<dbReference type="GO" id="GO:0030983">
    <property type="term" value="F:mismatched DNA binding"/>
    <property type="evidence" value="ECO:0007669"/>
    <property type="project" value="InterPro"/>
</dbReference>
<dbReference type="GO" id="GO:0043023">
    <property type="term" value="F:ribosomal large subunit binding"/>
    <property type="evidence" value="ECO:0007669"/>
    <property type="project" value="UniProtKB-UniRule"/>
</dbReference>
<dbReference type="GO" id="GO:0019843">
    <property type="term" value="F:rRNA binding"/>
    <property type="evidence" value="ECO:0007669"/>
    <property type="project" value="UniProtKB-UniRule"/>
</dbReference>
<dbReference type="GO" id="GO:0006298">
    <property type="term" value="P:mismatch repair"/>
    <property type="evidence" value="ECO:0007669"/>
    <property type="project" value="InterPro"/>
</dbReference>
<dbReference type="GO" id="GO:0045910">
    <property type="term" value="P:negative regulation of DNA recombination"/>
    <property type="evidence" value="ECO:0007669"/>
    <property type="project" value="InterPro"/>
</dbReference>
<dbReference type="GO" id="GO:0072344">
    <property type="term" value="P:rescue of stalled ribosome"/>
    <property type="evidence" value="ECO:0007669"/>
    <property type="project" value="UniProtKB-UniRule"/>
</dbReference>
<dbReference type="FunFam" id="3.30.1370.110:FF:000004">
    <property type="entry name" value="Endonuclease MutS2"/>
    <property type="match status" value="1"/>
</dbReference>
<dbReference type="FunFam" id="3.40.50.300:FF:000830">
    <property type="entry name" value="Endonuclease MutS2"/>
    <property type="match status" value="1"/>
</dbReference>
<dbReference type="Gene3D" id="3.30.1370.110">
    <property type="match status" value="1"/>
</dbReference>
<dbReference type="Gene3D" id="3.40.50.300">
    <property type="entry name" value="P-loop containing nucleotide triphosphate hydrolases"/>
    <property type="match status" value="1"/>
</dbReference>
<dbReference type="HAMAP" id="MF_00092">
    <property type="entry name" value="MutS2"/>
    <property type="match status" value="1"/>
</dbReference>
<dbReference type="InterPro" id="IPR000432">
    <property type="entry name" value="DNA_mismatch_repair_MutS_C"/>
</dbReference>
<dbReference type="InterPro" id="IPR007696">
    <property type="entry name" value="DNA_mismatch_repair_MutS_core"/>
</dbReference>
<dbReference type="InterPro" id="IPR036187">
    <property type="entry name" value="DNA_mismatch_repair_MutS_sf"/>
</dbReference>
<dbReference type="InterPro" id="IPR046893">
    <property type="entry name" value="MSSS"/>
</dbReference>
<dbReference type="InterPro" id="IPR045076">
    <property type="entry name" value="MutS"/>
</dbReference>
<dbReference type="InterPro" id="IPR005747">
    <property type="entry name" value="MutS2"/>
</dbReference>
<dbReference type="InterPro" id="IPR027417">
    <property type="entry name" value="P-loop_NTPase"/>
</dbReference>
<dbReference type="InterPro" id="IPR002625">
    <property type="entry name" value="Smr_dom"/>
</dbReference>
<dbReference type="InterPro" id="IPR036063">
    <property type="entry name" value="Smr_dom_sf"/>
</dbReference>
<dbReference type="NCBIfam" id="TIGR01069">
    <property type="entry name" value="mutS2"/>
    <property type="match status" value="1"/>
</dbReference>
<dbReference type="PANTHER" id="PTHR48466:SF2">
    <property type="entry name" value="OS10G0509000 PROTEIN"/>
    <property type="match status" value="1"/>
</dbReference>
<dbReference type="PANTHER" id="PTHR48466">
    <property type="entry name" value="OS10G0509000 PROTEIN-RELATED"/>
    <property type="match status" value="1"/>
</dbReference>
<dbReference type="Pfam" id="PF20297">
    <property type="entry name" value="MSSS"/>
    <property type="match status" value="1"/>
</dbReference>
<dbReference type="Pfam" id="PF00488">
    <property type="entry name" value="MutS_V"/>
    <property type="match status" value="1"/>
</dbReference>
<dbReference type="Pfam" id="PF01713">
    <property type="entry name" value="Smr"/>
    <property type="match status" value="1"/>
</dbReference>
<dbReference type="PIRSF" id="PIRSF005814">
    <property type="entry name" value="MutS_YshD"/>
    <property type="match status" value="1"/>
</dbReference>
<dbReference type="SMART" id="SM00534">
    <property type="entry name" value="MUTSac"/>
    <property type="match status" value="1"/>
</dbReference>
<dbReference type="SMART" id="SM00533">
    <property type="entry name" value="MUTSd"/>
    <property type="match status" value="1"/>
</dbReference>
<dbReference type="SMART" id="SM00463">
    <property type="entry name" value="SMR"/>
    <property type="match status" value="1"/>
</dbReference>
<dbReference type="SUPFAM" id="SSF48334">
    <property type="entry name" value="DNA repair protein MutS, domain III"/>
    <property type="match status" value="1"/>
</dbReference>
<dbReference type="SUPFAM" id="SSF52540">
    <property type="entry name" value="P-loop containing nucleoside triphosphate hydrolases"/>
    <property type="match status" value="1"/>
</dbReference>
<dbReference type="SUPFAM" id="SSF160443">
    <property type="entry name" value="SMR domain-like"/>
    <property type="match status" value="1"/>
</dbReference>
<dbReference type="PROSITE" id="PS00486">
    <property type="entry name" value="DNA_MISMATCH_REPAIR_2"/>
    <property type="match status" value="1"/>
</dbReference>
<dbReference type="PROSITE" id="PS50828">
    <property type="entry name" value="SMR"/>
    <property type="match status" value="1"/>
</dbReference>
<protein>
    <recommendedName>
        <fullName evidence="1">Endonuclease MutS2</fullName>
        <ecNumber evidence="1">3.1.-.-</ecNumber>
    </recommendedName>
    <alternativeName>
        <fullName evidence="1">Ribosome-associated protein quality control-upstream factor</fullName>
        <shortName evidence="1">RQC-upstream factor</shortName>
        <shortName evidence="1">RqcU</shortName>
        <ecNumber evidence="1">3.6.4.-</ecNumber>
    </alternativeName>
</protein>